<organism>
    <name type="scientific">Escherichia coli (strain K12)</name>
    <dbReference type="NCBI Taxonomy" id="83333"/>
    <lineage>
        <taxon>Bacteria</taxon>
        <taxon>Pseudomonadati</taxon>
        <taxon>Pseudomonadota</taxon>
        <taxon>Gammaproteobacteria</taxon>
        <taxon>Enterobacterales</taxon>
        <taxon>Enterobacteriaceae</taxon>
        <taxon>Escherichia</taxon>
    </lineage>
</organism>
<name>KEFB_ECOLI</name>
<evidence type="ECO:0000255" key="1">
    <source>
        <dbReference type="HAMAP-Rule" id="MF_01412"/>
    </source>
</evidence>
<evidence type="ECO:0000255" key="2">
    <source>
        <dbReference type="PROSITE-ProRule" id="PRU00543"/>
    </source>
</evidence>
<evidence type="ECO:0000269" key="3">
    <source>
    </source>
</evidence>
<evidence type="ECO:0000269" key="4">
    <source>
    </source>
</evidence>
<evidence type="ECO:0000269" key="5">
    <source>
    </source>
</evidence>
<dbReference type="EMBL" id="U18997">
    <property type="protein sequence ID" value="AAA58147.1"/>
    <property type="molecule type" value="Genomic_DNA"/>
</dbReference>
<dbReference type="EMBL" id="U00096">
    <property type="protein sequence ID" value="AAC76375.1"/>
    <property type="molecule type" value="Genomic_DNA"/>
</dbReference>
<dbReference type="EMBL" id="AP009048">
    <property type="protein sequence ID" value="BAE77940.1"/>
    <property type="molecule type" value="Genomic_DNA"/>
</dbReference>
<dbReference type="PIR" id="A65129">
    <property type="entry name" value="A65129"/>
</dbReference>
<dbReference type="RefSeq" id="NP_417809.1">
    <property type="nucleotide sequence ID" value="NC_000913.3"/>
</dbReference>
<dbReference type="RefSeq" id="WP_000399147.1">
    <property type="nucleotide sequence ID" value="NZ_SSZK01000008.1"/>
</dbReference>
<dbReference type="SMR" id="P45522"/>
<dbReference type="BioGRID" id="4262061">
    <property type="interactions" value="18"/>
</dbReference>
<dbReference type="ComplexPortal" id="CPX-3090">
    <property type="entry name" value="Glutathione-regulated potassium-efflux system KefB-KefG complex"/>
</dbReference>
<dbReference type="FunCoup" id="P45522">
    <property type="interactions" value="606"/>
</dbReference>
<dbReference type="STRING" id="511145.b3350"/>
<dbReference type="TCDB" id="2.A.37.1.2">
    <property type="family name" value="the monovalent cation:proton antiporter-2 (cpa2) family"/>
</dbReference>
<dbReference type="PaxDb" id="511145-b3350"/>
<dbReference type="EnsemblBacteria" id="AAC76375">
    <property type="protein sequence ID" value="AAC76375"/>
    <property type="gene ID" value="b3350"/>
</dbReference>
<dbReference type="GeneID" id="947858"/>
<dbReference type="KEGG" id="ecj:JW3313"/>
<dbReference type="KEGG" id="eco:b3350"/>
<dbReference type="KEGG" id="ecoc:C3026_18195"/>
<dbReference type="PATRIC" id="fig|1411691.4.peg.3380"/>
<dbReference type="EchoBASE" id="EB4144"/>
<dbReference type="eggNOG" id="COG0475">
    <property type="taxonomic scope" value="Bacteria"/>
</dbReference>
<dbReference type="eggNOG" id="COG1226">
    <property type="taxonomic scope" value="Bacteria"/>
</dbReference>
<dbReference type="HOGENOM" id="CLU_005126_9_3_6"/>
<dbReference type="InParanoid" id="P45522"/>
<dbReference type="OMA" id="AHFRKLD"/>
<dbReference type="OrthoDB" id="9781411at2"/>
<dbReference type="PhylomeDB" id="P45522"/>
<dbReference type="BioCyc" id="EcoCyc:KEFB-MONOMER"/>
<dbReference type="BioCyc" id="MetaCyc:KEFB-MONOMER"/>
<dbReference type="PRO" id="PR:P45522"/>
<dbReference type="Proteomes" id="UP000000625">
    <property type="component" value="Chromosome"/>
</dbReference>
<dbReference type="GO" id="GO:0005886">
    <property type="term" value="C:plasma membrane"/>
    <property type="evidence" value="ECO:0000314"/>
    <property type="project" value="EcoCyc"/>
</dbReference>
<dbReference type="GO" id="GO:1903103">
    <property type="term" value="C:potassium:proton antiporter complex"/>
    <property type="evidence" value="ECO:0000303"/>
    <property type="project" value="ComplexPortal"/>
</dbReference>
<dbReference type="GO" id="GO:0015503">
    <property type="term" value="F:glutathione-regulated potassium exporter activity"/>
    <property type="evidence" value="ECO:0007669"/>
    <property type="project" value="UniProtKB-UniRule"/>
</dbReference>
<dbReference type="GO" id="GO:0006813">
    <property type="term" value="P:potassium ion transport"/>
    <property type="evidence" value="ECO:0000316"/>
    <property type="project" value="EcoCyc"/>
</dbReference>
<dbReference type="GO" id="GO:1902600">
    <property type="term" value="P:proton transmembrane transport"/>
    <property type="evidence" value="ECO:0007669"/>
    <property type="project" value="InterPro"/>
</dbReference>
<dbReference type="GO" id="GO:0051453">
    <property type="term" value="P:regulation of intracellular pH"/>
    <property type="evidence" value="ECO:0000303"/>
    <property type="project" value="ComplexPortal"/>
</dbReference>
<dbReference type="FunFam" id="1.20.1530.20:FF:000001">
    <property type="entry name" value="Glutathione-regulated potassium-efflux system protein KefB"/>
    <property type="match status" value="1"/>
</dbReference>
<dbReference type="FunFam" id="3.40.50.720:FF:000036">
    <property type="entry name" value="Glutathione-regulated potassium-efflux system protein KefB"/>
    <property type="match status" value="1"/>
</dbReference>
<dbReference type="Gene3D" id="1.20.1530.20">
    <property type="match status" value="1"/>
</dbReference>
<dbReference type="Gene3D" id="3.40.50.720">
    <property type="entry name" value="NAD(P)-binding Rossmann-like Domain"/>
    <property type="match status" value="1"/>
</dbReference>
<dbReference type="HAMAP" id="MF_01412">
    <property type="entry name" value="K_H_efflux_KefB"/>
    <property type="match status" value="1"/>
</dbReference>
<dbReference type="InterPro" id="IPR006153">
    <property type="entry name" value="Cation/H_exchanger_TM"/>
</dbReference>
<dbReference type="InterPro" id="IPR004771">
    <property type="entry name" value="K/H_exchanger"/>
</dbReference>
<dbReference type="InterPro" id="IPR020884">
    <property type="entry name" value="K_H_efflux_KefB"/>
</dbReference>
<dbReference type="InterPro" id="IPR038770">
    <property type="entry name" value="Na+/solute_symporter_sf"/>
</dbReference>
<dbReference type="InterPro" id="IPR036291">
    <property type="entry name" value="NAD(P)-bd_dom_sf"/>
</dbReference>
<dbReference type="InterPro" id="IPR003148">
    <property type="entry name" value="RCK_N"/>
</dbReference>
<dbReference type="NCBIfam" id="TIGR00932">
    <property type="entry name" value="2a37"/>
    <property type="match status" value="1"/>
</dbReference>
<dbReference type="NCBIfam" id="NF002973">
    <property type="entry name" value="PRK03659.1"/>
    <property type="match status" value="1"/>
</dbReference>
<dbReference type="PANTHER" id="PTHR46157">
    <property type="entry name" value="K(+) EFFLUX ANTIPORTER 3, CHLOROPLASTIC"/>
    <property type="match status" value="1"/>
</dbReference>
<dbReference type="PANTHER" id="PTHR46157:SF4">
    <property type="entry name" value="K(+) EFFLUX ANTIPORTER 3, CHLOROPLASTIC"/>
    <property type="match status" value="1"/>
</dbReference>
<dbReference type="Pfam" id="PF00999">
    <property type="entry name" value="Na_H_Exchanger"/>
    <property type="match status" value="1"/>
</dbReference>
<dbReference type="Pfam" id="PF02254">
    <property type="entry name" value="TrkA_N"/>
    <property type="match status" value="1"/>
</dbReference>
<dbReference type="SUPFAM" id="SSF51735">
    <property type="entry name" value="NAD(P)-binding Rossmann-fold domains"/>
    <property type="match status" value="1"/>
</dbReference>
<dbReference type="PROSITE" id="PS51201">
    <property type="entry name" value="RCK_N"/>
    <property type="match status" value="1"/>
</dbReference>
<proteinExistence type="inferred from homology"/>
<keyword id="KW-0050">Antiport</keyword>
<keyword id="KW-0997">Cell inner membrane</keyword>
<keyword id="KW-1003">Cell membrane</keyword>
<keyword id="KW-0406">Ion transport</keyword>
<keyword id="KW-0472">Membrane</keyword>
<keyword id="KW-0630">Potassium</keyword>
<keyword id="KW-0633">Potassium transport</keyword>
<keyword id="KW-1185">Reference proteome</keyword>
<keyword id="KW-0812">Transmembrane</keyword>
<keyword id="KW-1133">Transmembrane helix</keyword>
<keyword id="KW-0813">Transport</keyword>
<gene>
    <name evidence="1" type="primary">kefB</name>
    <name type="synonym">trkB</name>
    <name type="ordered locus">b3350</name>
    <name type="ordered locus">JW3313</name>
</gene>
<reference key="1">
    <citation type="journal article" date="1997" name="Science">
        <title>The complete genome sequence of Escherichia coli K-12.</title>
        <authorList>
            <person name="Blattner F.R."/>
            <person name="Plunkett G. III"/>
            <person name="Bloch C.A."/>
            <person name="Perna N.T."/>
            <person name="Burland V."/>
            <person name="Riley M."/>
            <person name="Collado-Vides J."/>
            <person name="Glasner J.D."/>
            <person name="Rode C.K."/>
            <person name="Mayhew G.F."/>
            <person name="Gregor J."/>
            <person name="Davis N.W."/>
            <person name="Kirkpatrick H.A."/>
            <person name="Goeden M.A."/>
            <person name="Rose D.J."/>
            <person name="Mau B."/>
            <person name="Shao Y."/>
        </authorList>
    </citation>
    <scope>NUCLEOTIDE SEQUENCE [LARGE SCALE GENOMIC DNA]</scope>
    <source>
        <strain>K12 / MG1655 / ATCC 47076</strain>
    </source>
</reference>
<reference key="2">
    <citation type="journal article" date="2006" name="Mol. Syst. Biol.">
        <title>Highly accurate genome sequences of Escherichia coli K-12 strains MG1655 and W3110.</title>
        <authorList>
            <person name="Hayashi K."/>
            <person name="Morooka N."/>
            <person name="Yamamoto Y."/>
            <person name="Fujita K."/>
            <person name="Isono K."/>
            <person name="Choi S."/>
            <person name="Ohtsubo E."/>
            <person name="Baba T."/>
            <person name="Wanner B.L."/>
            <person name="Mori H."/>
            <person name="Horiuchi T."/>
        </authorList>
    </citation>
    <scope>NUCLEOTIDE SEQUENCE [LARGE SCALE GENOMIC DNA]</scope>
    <source>
        <strain>K12 / W3110 / ATCC 27325 / DSM 5911</strain>
    </source>
</reference>
<reference key="3">
    <citation type="journal article" date="1987" name="J. Bacteriol.">
        <title>Evidence for multiple K+ export systems in Escherichia coli.</title>
        <authorList>
            <person name="Bakker E.P."/>
            <person name="Booth I.R."/>
            <person name="Dinnbier U."/>
            <person name="Epstein W."/>
            <person name="Gajewska A."/>
        </authorList>
    </citation>
    <scope>FUNCTION</scope>
</reference>
<reference key="4">
    <citation type="journal article" date="1997" name="J. Bacteriol.">
        <title>Survival during exposure to the electrophilic reagent N-ethylmaleimide in Escherichia coli: role of KefB and KefC potassium channels.</title>
        <authorList>
            <person name="Ferguson G.P."/>
            <person name="Nikolaev Y."/>
            <person name="McLaggan D."/>
            <person name="Maclean M."/>
            <person name="Booth I.R."/>
        </authorList>
    </citation>
    <scope>FUNCTION</scope>
    <scope>ACTIVITY REGULATION</scope>
    <source>
        <strain>K12</strain>
    </source>
</reference>
<reference key="5">
    <citation type="journal article" date="2005" name="Science">
        <title>Global topology analysis of the Escherichia coli inner membrane proteome.</title>
        <authorList>
            <person name="Daley D.O."/>
            <person name="Rapp M."/>
            <person name="Granseth E."/>
            <person name="Melen K."/>
            <person name="Drew D."/>
            <person name="von Heijne G."/>
        </authorList>
    </citation>
    <scope>SUBCELLULAR LOCATION</scope>
    <source>
        <strain>K12 / MG1655 / ATCC 47076</strain>
    </source>
</reference>
<accession>P45522</accession>
<accession>Q2M716</accession>
<sequence>MEGSDFLLAGVLFLFAAVAAVPLASRLGIGAVLGYLLAGIAIGPWGLGFISDVDEILHFSELGVVFLMFIIGLELNPSKLWQLRRSIFGVGAAQVLLSAALLAGLLMLTDFAWQAAVVGGIGLAMSSTAMALQLMREKGMNRSESGQLGFSVLLFQDLAVIPALALVPLLAGSADEHFDWMKVGMKVLAFVGMLIGGRYLLRPVFRFIAASGVREVFTAATLLLVLGSALFMDALGLSMALGTFIAGVLLAESEYRHELETAIDPFKGLLLGLFFISVGMSLNLGVLYTHLLWVVISVVVLVAVKILVLYLLARLYGVRSSERMQFAGVLSQGGEFAFVLFSTASSQRLFQGDQMALLLVTVTLSMMTTPLLMKLVDKWLSRQFNGPEEEDEKPWVNDDKPQVIVVGFGRFGQVIGRLLMANKMRITVLERDISAVNLMRKYGYKVYYGDATQVDLLRSAGAEAAESIVITCNEPEDTMKLVEICQQHFPHLHILARARGRVEAHELLQAGVTQFSRETFSSALELGRKTLVTLGMHPHQAQRAQLHFRRLDMRMLRELIPMHADTVQISRAREARRELEEIFQREMQQERRQLDGWDEFE</sequence>
<comment type="function">
    <text evidence="1 4 5">Pore-forming subunit of a potassium efflux system that confers protection against electrophiles. Catalyzes K(+)/H(+) antiport.</text>
</comment>
<comment type="activity regulation">
    <text evidence="5">Activated by adducts between glutathione and electrophiles.</text>
</comment>
<comment type="subunit">
    <text evidence="1">Interacts with the regulatory subunit KefG.</text>
</comment>
<comment type="subcellular location">
    <subcellularLocation>
        <location evidence="1 3">Cell inner membrane</location>
        <topology evidence="1 3">Multi-pass membrane protein</topology>
    </subcellularLocation>
</comment>
<comment type="similarity">
    <text evidence="1">Belongs to the monovalent cation:proton antiporter 2 (CPA2) transporter (TC 2.A.37) family. KefB subfamily.</text>
</comment>
<protein>
    <recommendedName>
        <fullName evidence="1">Glutathione-regulated potassium-efflux system protein KefB</fullName>
    </recommendedName>
    <alternativeName>
        <fullName evidence="1">K(+)/H(+) antiporter</fullName>
    </alternativeName>
    <alternativeName>
        <fullName>NEM-activable K(+)/H(+) antiporter</fullName>
    </alternativeName>
</protein>
<feature type="chain" id="PRO_0000196596" description="Glutathione-regulated potassium-efflux system protein KefB">
    <location>
        <begin position="1"/>
        <end position="601"/>
    </location>
</feature>
<feature type="transmembrane region" description="Helical" evidence="1">
    <location>
        <begin position="4"/>
        <end position="24"/>
    </location>
</feature>
<feature type="transmembrane region" description="Helical" evidence="1">
    <location>
        <begin position="29"/>
        <end position="49"/>
    </location>
</feature>
<feature type="transmembrane region" description="Helical" evidence="1">
    <location>
        <begin position="55"/>
        <end position="75"/>
    </location>
</feature>
<feature type="transmembrane region" description="Helical" evidence="1">
    <location>
        <begin position="87"/>
        <end position="107"/>
    </location>
</feature>
<feature type="transmembrane region" description="Helical" evidence="1">
    <location>
        <begin position="115"/>
        <end position="135"/>
    </location>
</feature>
<feature type="transmembrane region" description="Helical" evidence="1">
    <location>
        <begin position="152"/>
        <end position="172"/>
    </location>
</feature>
<feature type="transmembrane region" description="Helical" evidence="1">
    <location>
        <begin position="177"/>
        <end position="197"/>
    </location>
</feature>
<feature type="transmembrane region" description="Helical" evidence="1">
    <location>
        <begin position="207"/>
        <end position="227"/>
    </location>
</feature>
<feature type="transmembrane region" description="Helical" evidence="1">
    <location>
        <begin position="230"/>
        <end position="250"/>
    </location>
</feature>
<feature type="transmembrane region" description="Helical" evidence="1">
    <location>
        <begin position="268"/>
        <end position="288"/>
    </location>
</feature>
<feature type="transmembrane region" description="Helical" evidence="1">
    <location>
        <begin position="291"/>
        <end position="311"/>
    </location>
</feature>
<feature type="transmembrane region" description="Helical" evidence="1">
    <location>
        <begin position="324"/>
        <end position="344"/>
    </location>
</feature>
<feature type="transmembrane region" description="Helical" evidence="1">
    <location>
        <begin position="356"/>
        <end position="376"/>
    </location>
</feature>
<feature type="domain" description="RCK N-terminal" evidence="2">
    <location>
        <begin position="400"/>
        <end position="519"/>
    </location>
</feature>